<dbReference type="EC" id="3.6.-.-" evidence="1"/>
<dbReference type="EMBL" id="AP006716">
    <property type="protein sequence ID" value="BAE05985.1"/>
    <property type="molecule type" value="Genomic_DNA"/>
</dbReference>
<dbReference type="RefSeq" id="WP_011276915.1">
    <property type="nucleotide sequence ID" value="NC_007168.1"/>
</dbReference>
<dbReference type="SMR" id="Q4L2Z2"/>
<dbReference type="GeneID" id="93781913"/>
<dbReference type="KEGG" id="sha:SH2676"/>
<dbReference type="eggNOG" id="COG0486">
    <property type="taxonomic scope" value="Bacteria"/>
</dbReference>
<dbReference type="HOGENOM" id="CLU_019624_4_1_9"/>
<dbReference type="OrthoDB" id="9805918at2"/>
<dbReference type="Proteomes" id="UP000000543">
    <property type="component" value="Chromosome"/>
</dbReference>
<dbReference type="GO" id="GO:0005829">
    <property type="term" value="C:cytosol"/>
    <property type="evidence" value="ECO:0007669"/>
    <property type="project" value="TreeGrafter"/>
</dbReference>
<dbReference type="GO" id="GO:0005525">
    <property type="term" value="F:GTP binding"/>
    <property type="evidence" value="ECO:0007669"/>
    <property type="project" value="UniProtKB-UniRule"/>
</dbReference>
<dbReference type="GO" id="GO:0003924">
    <property type="term" value="F:GTPase activity"/>
    <property type="evidence" value="ECO:0007669"/>
    <property type="project" value="UniProtKB-UniRule"/>
</dbReference>
<dbReference type="GO" id="GO:0046872">
    <property type="term" value="F:metal ion binding"/>
    <property type="evidence" value="ECO:0007669"/>
    <property type="project" value="UniProtKB-KW"/>
</dbReference>
<dbReference type="GO" id="GO:0030488">
    <property type="term" value="P:tRNA methylation"/>
    <property type="evidence" value="ECO:0007669"/>
    <property type="project" value="TreeGrafter"/>
</dbReference>
<dbReference type="GO" id="GO:0002098">
    <property type="term" value="P:tRNA wobble uridine modification"/>
    <property type="evidence" value="ECO:0007669"/>
    <property type="project" value="TreeGrafter"/>
</dbReference>
<dbReference type="CDD" id="cd04164">
    <property type="entry name" value="trmE"/>
    <property type="match status" value="1"/>
</dbReference>
<dbReference type="CDD" id="cd14858">
    <property type="entry name" value="TrmE_N"/>
    <property type="match status" value="1"/>
</dbReference>
<dbReference type="FunFam" id="3.30.1360.120:FF:000003">
    <property type="entry name" value="tRNA modification GTPase MnmE"/>
    <property type="match status" value="1"/>
</dbReference>
<dbReference type="FunFam" id="3.40.50.300:FF:000494">
    <property type="entry name" value="tRNA modification GTPase MnmE"/>
    <property type="match status" value="1"/>
</dbReference>
<dbReference type="Gene3D" id="3.40.50.300">
    <property type="entry name" value="P-loop containing nucleotide triphosphate hydrolases"/>
    <property type="match status" value="1"/>
</dbReference>
<dbReference type="Gene3D" id="3.30.1360.120">
    <property type="entry name" value="Probable tRNA modification gtpase trme, domain 1"/>
    <property type="match status" value="1"/>
</dbReference>
<dbReference type="Gene3D" id="1.20.120.430">
    <property type="entry name" value="tRNA modification GTPase MnmE domain 2"/>
    <property type="match status" value="1"/>
</dbReference>
<dbReference type="HAMAP" id="MF_00379">
    <property type="entry name" value="GTPase_MnmE"/>
    <property type="match status" value="1"/>
</dbReference>
<dbReference type="InterPro" id="IPR031168">
    <property type="entry name" value="G_TrmE"/>
</dbReference>
<dbReference type="InterPro" id="IPR006073">
    <property type="entry name" value="GTP-bd"/>
</dbReference>
<dbReference type="InterPro" id="IPR018948">
    <property type="entry name" value="GTP-bd_TrmE_N"/>
</dbReference>
<dbReference type="InterPro" id="IPR004520">
    <property type="entry name" value="GTPase_MnmE"/>
</dbReference>
<dbReference type="InterPro" id="IPR027368">
    <property type="entry name" value="MnmE_dom2"/>
</dbReference>
<dbReference type="InterPro" id="IPR025867">
    <property type="entry name" value="MnmE_helical"/>
</dbReference>
<dbReference type="InterPro" id="IPR027417">
    <property type="entry name" value="P-loop_NTPase"/>
</dbReference>
<dbReference type="InterPro" id="IPR005225">
    <property type="entry name" value="Small_GTP-bd"/>
</dbReference>
<dbReference type="InterPro" id="IPR027266">
    <property type="entry name" value="TrmE/GcvT_dom1"/>
</dbReference>
<dbReference type="NCBIfam" id="TIGR00450">
    <property type="entry name" value="mnmE_trmE_thdF"/>
    <property type="match status" value="1"/>
</dbReference>
<dbReference type="NCBIfam" id="NF003661">
    <property type="entry name" value="PRK05291.1-3"/>
    <property type="match status" value="1"/>
</dbReference>
<dbReference type="NCBIfam" id="TIGR00231">
    <property type="entry name" value="small_GTP"/>
    <property type="match status" value="1"/>
</dbReference>
<dbReference type="PANTHER" id="PTHR42714">
    <property type="entry name" value="TRNA MODIFICATION GTPASE GTPBP3"/>
    <property type="match status" value="1"/>
</dbReference>
<dbReference type="PANTHER" id="PTHR42714:SF2">
    <property type="entry name" value="TRNA MODIFICATION GTPASE GTPBP3, MITOCHONDRIAL"/>
    <property type="match status" value="1"/>
</dbReference>
<dbReference type="Pfam" id="PF01926">
    <property type="entry name" value="MMR_HSR1"/>
    <property type="match status" value="1"/>
</dbReference>
<dbReference type="Pfam" id="PF12631">
    <property type="entry name" value="MnmE_helical"/>
    <property type="match status" value="1"/>
</dbReference>
<dbReference type="Pfam" id="PF10396">
    <property type="entry name" value="TrmE_N"/>
    <property type="match status" value="1"/>
</dbReference>
<dbReference type="PRINTS" id="PR00449">
    <property type="entry name" value="RASTRNSFRMNG"/>
</dbReference>
<dbReference type="SUPFAM" id="SSF52540">
    <property type="entry name" value="P-loop containing nucleoside triphosphate hydrolases"/>
    <property type="match status" value="1"/>
</dbReference>
<dbReference type="SUPFAM" id="SSF116878">
    <property type="entry name" value="TrmE connector domain"/>
    <property type="match status" value="1"/>
</dbReference>
<dbReference type="PROSITE" id="PS51709">
    <property type="entry name" value="G_TRME"/>
    <property type="match status" value="1"/>
</dbReference>
<sequence>MDFDTITSISTPMGEGAIGIVRLSGPQAVEIGDKLYKGKKKLEDVDSHTINYGHIVDPETNEVVEEVMISVLRAPRTFTREDIIEINCHGGILTINRILELTMTHGARMAEPGEYTKRAFLNGRIDLSQAEAVMDFIRSKTDRASKVAMNQIEGRLSDLIKRQRQSILEILAQVEVNIDYPEYDDVEDATTEFLLEQSKKIKNEINLLLETGAQGKIMREGLSTVIVGKPNVGKSSMLNNLIQDNKAIVTEVAGTTRDVLEEYVNVRGVPLRLVDTAGIRDTEDIVEKIGVERSRKALSEADLILFVLNNNEPLTQEDRTLYEVIKNEDAIVIVNKTDLEQNLDINEVKEMIGDTPLIQTSMLKQEGIDQLELQIRDLFFGGDVQNQDMTYVSNSRHISLLKQARNAIQDAIDAAESGIPMDMVQIDLTRTWELLGEIIGESASDELIDQLFSQFCLGK</sequence>
<gene>
    <name evidence="1" type="primary">mnmE</name>
    <name evidence="1" type="synonym">trmE</name>
    <name type="ordered locus">SH2676</name>
</gene>
<name>MNME_STAHJ</name>
<comment type="function">
    <text evidence="1">Exhibits a very high intrinsic GTPase hydrolysis rate. Involved in the addition of a carboxymethylaminomethyl (cmnm) group at the wobble position (U34) of certain tRNAs, forming tRNA-cmnm(5)s(2)U34.</text>
</comment>
<comment type="cofactor">
    <cofactor evidence="1">
        <name>K(+)</name>
        <dbReference type="ChEBI" id="CHEBI:29103"/>
    </cofactor>
    <text evidence="1">Binds 1 potassium ion per subunit.</text>
</comment>
<comment type="subunit">
    <text evidence="1">Homodimer. Heterotetramer of two MnmE and two MnmG subunits.</text>
</comment>
<comment type="subcellular location">
    <subcellularLocation>
        <location evidence="1">Cytoplasm</location>
    </subcellularLocation>
</comment>
<comment type="similarity">
    <text evidence="1">Belongs to the TRAFAC class TrmE-Era-EngA-EngB-Septin-like GTPase superfamily. TrmE GTPase family.</text>
</comment>
<keyword id="KW-0963">Cytoplasm</keyword>
<keyword id="KW-0342">GTP-binding</keyword>
<keyword id="KW-0378">Hydrolase</keyword>
<keyword id="KW-0460">Magnesium</keyword>
<keyword id="KW-0479">Metal-binding</keyword>
<keyword id="KW-0547">Nucleotide-binding</keyword>
<keyword id="KW-0630">Potassium</keyword>
<keyword id="KW-0819">tRNA processing</keyword>
<proteinExistence type="inferred from homology"/>
<protein>
    <recommendedName>
        <fullName evidence="1">tRNA modification GTPase MnmE</fullName>
        <ecNumber evidence="1">3.6.-.-</ecNumber>
    </recommendedName>
</protein>
<reference key="1">
    <citation type="journal article" date="2005" name="J. Bacteriol.">
        <title>Whole-genome sequencing of Staphylococcus haemolyticus uncovers the extreme plasticity of its genome and the evolution of human-colonizing staphylococcal species.</title>
        <authorList>
            <person name="Takeuchi F."/>
            <person name="Watanabe S."/>
            <person name="Baba T."/>
            <person name="Yuzawa H."/>
            <person name="Ito T."/>
            <person name="Morimoto Y."/>
            <person name="Kuroda M."/>
            <person name="Cui L."/>
            <person name="Takahashi M."/>
            <person name="Ankai A."/>
            <person name="Baba S."/>
            <person name="Fukui S."/>
            <person name="Lee J.C."/>
            <person name="Hiramatsu K."/>
        </authorList>
    </citation>
    <scope>NUCLEOTIDE SEQUENCE [LARGE SCALE GENOMIC DNA]</scope>
    <source>
        <strain>JCSC1435</strain>
    </source>
</reference>
<evidence type="ECO:0000255" key="1">
    <source>
        <dbReference type="HAMAP-Rule" id="MF_00379"/>
    </source>
</evidence>
<organism>
    <name type="scientific">Staphylococcus haemolyticus (strain JCSC1435)</name>
    <dbReference type="NCBI Taxonomy" id="279808"/>
    <lineage>
        <taxon>Bacteria</taxon>
        <taxon>Bacillati</taxon>
        <taxon>Bacillota</taxon>
        <taxon>Bacilli</taxon>
        <taxon>Bacillales</taxon>
        <taxon>Staphylococcaceae</taxon>
        <taxon>Staphylococcus</taxon>
    </lineage>
</organism>
<accession>Q4L2Z2</accession>
<feature type="chain" id="PRO_0000188923" description="tRNA modification GTPase MnmE">
    <location>
        <begin position="1"/>
        <end position="459"/>
    </location>
</feature>
<feature type="domain" description="TrmE-type G">
    <location>
        <begin position="221"/>
        <end position="380"/>
    </location>
</feature>
<feature type="binding site" evidence="1">
    <location>
        <position position="22"/>
    </location>
    <ligand>
        <name>(6S)-5-formyl-5,6,7,8-tetrahydrofolate</name>
        <dbReference type="ChEBI" id="CHEBI:57457"/>
    </ligand>
</feature>
<feature type="binding site" evidence="1">
    <location>
        <position position="85"/>
    </location>
    <ligand>
        <name>(6S)-5-formyl-5,6,7,8-tetrahydrofolate</name>
        <dbReference type="ChEBI" id="CHEBI:57457"/>
    </ligand>
</feature>
<feature type="binding site" evidence="1">
    <location>
        <position position="124"/>
    </location>
    <ligand>
        <name>(6S)-5-formyl-5,6,7,8-tetrahydrofolate</name>
        <dbReference type="ChEBI" id="CHEBI:57457"/>
    </ligand>
</feature>
<feature type="binding site" evidence="1">
    <location>
        <begin position="231"/>
        <end position="236"/>
    </location>
    <ligand>
        <name>GTP</name>
        <dbReference type="ChEBI" id="CHEBI:37565"/>
    </ligand>
</feature>
<feature type="binding site" evidence="1">
    <location>
        <position position="231"/>
    </location>
    <ligand>
        <name>K(+)</name>
        <dbReference type="ChEBI" id="CHEBI:29103"/>
    </ligand>
</feature>
<feature type="binding site" evidence="1">
    <location>
        <position position="235"/>
    </location>
    <ligand>
        <name>Mg(2+)</name>
        <dbReference type="ChEBI" id="CHEBI:18420"/>
    </ligand>
</feature>
<feature type="binding site" evidence="1">
    <location>
        <begin position="250"/>
        <end position="256"/>
    </location>
    <ligand>
        <name>GTP</name>
        <dbReference type="ChEBI" id="CHEBI:37565"/>
    </ligand>
</feature>
<feature type="binding site" evidence="1">
    <location>
        <position position="250"/>
    </location>
    <ligand>
        <name>K(+)</name>
        <dbReference type="ChEBI" id="CHEBI:29103"/>
    </ligand>
</feature>
<feature type="binding site" evidence="1">
    <location>
        <position position="252"/>
    </location>
    <ligand>
        <name>K(+)</name>
        <dbReference type="ChEBI" id="CHEBI:29103"/>
    </ligand>
</feature>
<feature type="binding site" evidence="1">
    <location>
        <position position="255"/>
    </location>
    <ligand>
        <name>K(+)</name>
        <dbReference type="ChEBI" id="CHEBI:29103"/>
    </ligand>
</feature>
<feature type="binding site" evidence="1">
    <location>
        <position position="256"/>
    </location>
    <ligand>
        <name>Mg(2+)</name>
        <dbReference type="ChEBI" id="CHEBI:18420"/>
    </ligand>
</feature>
<feature type="binding site" evidence="1">
    <location>
        <begin position="275"/>
        <end position="278"/>
    </location>
    <ligand>
        <name>GTP</name>
        <dbReference type="ChEBI" id="CHEBI:37565"/>
    </ligand>
</feature>
<feature type="binding site" evidence="1">
    <location>
        <position position="459"/>
    </location>
    <ligand>
        <name>(6S)-5-formyl-5,6,7,8-tetrahydrofolate</name>
        <dbReference type="ChEBI" id="CHEBI:57457"/>
    </ligand>
</feature>